<proteinExistence type="inferred from homology"/>
<reference key="1">
    <citation type="journal article" date="1996" name="DNA Res.">
        <title>Sequence analysis of the genome of the unicellular cyanobacterium Synechocystis sp. strain PCC6803. II. Sequence determination of the entire genome and assignment of potential protein-coding regions.</title>
        <authorList>
            <person name="Kaneko T."/>
            <person name="Sato S."/>
            <person name="Kotani H."/>
            <person name="Tanaka A."/>
            <person name="Asamizu E."/>
            <person name="Nakamura Y."/>
            <person name="Miyajima N."/>
            <person name="Hirosawa M."/>
            <person name="Sugiura M."/>
            <person name="Sasamoto S."/>
            <person name="Kimura T."/>
            <person name="Hosouchi T."/>
            <person name="Matsuno A."/>
            <person name="Muraki A."/>
            <person name="Nakazaki N."/>
            <person name="Naruo K."/>
            <person name="Okumura S."/>
            <person name="Shimpo S."/>
            <person name="Takeuchi C."/>
            <person name="Wada T."/>
            <person name="Watanabe A."/>
            <person name="Yamada M."/>
            <person name="Yasuda M."/>
            <person name="Tabata S."/>
        </authorList>
    </citation>
    <scope>NUCLEOTIDE SEQUENCE [LARGE SCALE GENOMIC DNA]</scope>
    <source>
        <strain>ATCC 27184 / PCC 6803 / Kazusa</strain>
    </source>
</reference>
<evidence type="ECO:0000305" key="1"/>
<gene>
    <name type="ordered locus">sll1178</name>
</gene>
<protein>
    <recommendedName>
        <fullName>Uncharacterized protein sll1178</fullName>
    </recommendedName>
</protein>
<keyword id="KW-1185">Reference proteome</keyword>
<keyword id="KW-0808">Transferase</keyword>
<feature type="chain" id="PRO_0000207856" description="Uncharacterized protein sll1178">
    <location>
        <begin position="1"/>
        <end position="615"/>
    </location>
</feature>
<name>Y1178_SYNY3</name>
<sequence length="615" mass="69142">MTHILGISAYYHDSAAALVKDGVIVAAVQEERFTRKKHDASFPTQGINYCLGEAGISLKEVDYIVFYEKPLVTFERLLETYLAFAPRGLRSFIAAMSAWLQEKLYLKTVLKKALAELGDCKTKDLPPLLFNEHHQSHAASAFFPSPFDEAAVLCMDGVGEWATTSLWSGQGNQLTPHWEIHFPHSLGLLYSAFTYYTGFKVNSGEYKLMGLAPYGEPKYVDLILDNLLDLKADGTFRLNMAYFNYATGLTMTNKKFADLFGAPRRSPESPLTQREMDIAASIQVVTEKVVLRLGNTVYEELGLENLCLAGGVALNCVANGRLLREGKFKNIWIQPAAGDAGGAIGAALSVWHQYLQNERMVRKPDAMAGSYLGPRFTNEEIETYLKGPAVQAVYDYYSDEDLFGKVAHILAGGNVVGWFQGRMEFGPRALGGRSIIGDPRNTTMQSVMNLKIKYRESFRPFAPSVLAEKVGDYFELDQPSPYMLIVADVREELRLPLTPEQEQLFGIEKLNIPRSQLPAITHVDNSARIQTVHPETNPRYYQLLRQFEALTDCGVLVNTSFNVRGEPIVCTPEDAYRCFMRTEMDYLVLENFVLAKTAQPQREQDQKWQEEFELD</sequence>
<dbReference type="EMBL" id="BA000022">
    <property type="protein sequence ID" value="BAA18267.1"/>
    <property type="molecule type" value="Genomic_DNA"/>
</dbReference>
<dbReference type="PIR" id="S75808">
    <property type="entry name" value="S75808"/>
</dbReference>
<dbReference type="SMR" id="P74178"/>
<dbReference type="IntAct" id="P74178">
    <property type="interactions" value="2"/>
</dbReference>
<dbReference type="STRING" id="1148.gene:10499143"/>
<dbReference type="PaxDb" id="1148-1653353"/>
<dbReference type="EnsemblBacteria" id="BAA18267">
    <property type="protein sequence ID" value="BAA18267"/>
    <property type="gene ID" value="BAA18267"/>
</dbReference>
<dbReference type="KEGG" id="syn:sll1178"/>
<dbReference type="eggNOG" id="COG2192">
    <property type="taxonomic scope" value="Bacteria"/>
</dbReference>
<dbReference type="InParanoid" id="P74178"/>
<dbReference type="PhylomeDB" id="P74178"/>
<dbReference type="Proteomes" id="UP000001425">
    <property type="component" value="Chromosome"/>
</dbReference>
<dbReference type="GO" id="GO:0016740">
    <property type="term" value="F:transferase activity"/>
    <property type="evidence" value="ECO:0007669"/>
    <property type="project" value="UniProtKB-KW"/>
</dbReference>
<dbReference type="GO" id="GO:0009058">
    <property type="term" value="P:biosynthetic process"/>
    <property type="evidence" value="ECO:0007669"/>
    <property type="project" value="InterPro"/>
</dbReference>
<dbReference type="CDD" id="cd24098">
    <property type="entry name" value="ASKHA_NBD_TobZ_N"/>
    <property type="match status" value="1"/>
</dbReference>
<dbReference type="Gene3D" id="3.30.420.40">
    <property type="match status" value="2"/>
</dbReference>
<dbReference type="Gene3D" id="3.90.870.20">
    <property type="entry name" value="Carbamoyltransferase, C-terminal domain"/>
    <property type="match status" value="1"/>
</dbReference>
<dbReference type="InterPro" id="IPR043129">
    <property type="entry name" value="ATPase_NBD"/>
</dbReference>
<dbReference type="InterPro" id="IPR031730">
    <property type="entry name" value="Carbam_trans_C"/>
</dbReference>
<dbReference type="InterPro" id="IPR038152">
    <property type="entry name" value="Carbam_trans_C_sf"/>
</dbReference>
<dbReference type="InterPro" id="IPR003696">
    <property type="entry name" value="Carbtransf_dom"/>
</dbReference>
<dbReference type="InterPro" id="IPR051338">
    <property type="entry name" value="NodU/CmcH_Carbamoyltrnsfr"/>
</dbReference>
<dbReference type="PANTHER" id="PTHR34847">
    <property type="entry name" value="NODULATION PROTEIN U"/>
    <property type="match status" value="1"/>
</dbReference>
<dbReference type="PANTHER" id="PTHR34847:SF1">
    <property type="entry name" value="NODULATION PROTEIN U"/>
    <property type="match status" value="1"/>
</dbReference>
<dbReference type="Pfam" id="PF16861">
    <property type="entry name" value="Carbam_trans_C"/>
    <property type="match status" value="1"/>
</dbReference>
<dbReference type="Pfam" id="PF02543">
    <property type="entry name" value="Carbam_trans_N"/>
    <property type="match status" value="1"/>
</dbReference>
<dbReference type="SUPFAM" id="SSF53067">
    <property type="entry name" value="Actin-like ATPase domain"/>
    <property type="match status" value="1"/>
</dbReference>
<accession>P74178</accession>
<organism>
    <name type="scientific">Synechocystis sp. (strain ATCC 27184 / PCC 6803 / Kazusa)</name>
    <dbReference type="NCBI Taxonomy" id="1111708"/>
    <lineage>
        <taxon>Bacteria</taxon>
        <taxon>Bacillati</taxon>
        <taxon>Cyanobacteriota</taxon>
        <taxon>Cyanophyceae</taxon>
        <taxon>Synechococcales</taxon>
        <taxon>Merismopediaceae</taxon>
        <taxon>Synechocystis</taxon>
    </lineage>
</organism>
<comment type="similarity">
    <text evidence="1">Belongs to the NodU/CmcH family.</text>
</comment>